<protein>
    <recommendedName>
        <fullName>Type 1 phosphatases regulator ypi1</fullName>
    </recommendedName>
</protein>
<accession>A7EXU7</accession>
<sequence length="179" mass="19057">MASSTSNSAAARMQTHLQTEPQNRSQNQLQGSVTITQSQTHTSAPVLRLRGESTGESESSTNGERGLGRGRRIQWAEDVVDNEGLGRKKSKVCCIYHAPRPIDESSDESSSDSDDSSSDDDGGAKPSGGNGDKHDHGDECAHGHAHGKGKGKGKERKRSPNAYERQPNYKGKDKGKGGG</sequence>
<proteinExistence type="inferred from homology"/>
<name>YPI1_SCLS1</name>
<organism>
    <name type="scientific">Sclerotinia sclerotiorum (strain ATCC 18683 / 1980 / Ss-1)</name>
    <name type="common">White mold</name>
    <name type="synonym">Whetzelinia sclerotiorum</name>
    <dbReference type="NCBI Taxonomy" id="665079"/>
    <lineage>
        <taxon>Eukaryota</taxon>
        <taxon>Fungi</taxon>
        <taxon>Dikarya</taxon>
        <taxon>Ascomycota</taxon>
        <taxon>Pezizomycotina</taxon>
        <taxon>Leotiomycetes</taxon>
        <taxon>Helotiales</taxon>
        <taxon>Sclerotiniaceae</taxon>
        <taxon>Sclerotinia</taxon>
    </lineage>
</organism>
<reference key="1">
    <citation type="journal article" date="2011" name="PLoS Genet.">
        <title>Genomic analysis of the necrotrophic fungal pathogens Sclerotinia sclerotiorum and Botrytis cinerea.</title>
        <authorList>
            <person name="Amselem J."/>
            <person name="Cuomo C.A."/>
            <person name="van Kan J.A.L."/>
            <person name="Viaud M."/>
            <person name="Benito E.P."/>
            <person name="Couloux A."/>
            <person name="Coutinho P.M."/>
            <person name="de Vries R.P."/>
            <person name="Dyer P.S."/>
            <person name="Fillinger S."/>
            <person name="Fournier E."/>
            <person name="Gout L."/>
            <person name="Hahn M."/>
            <person name="Kohn L."/>
            <person name="Lapalu N."/>
            <person name="Plummer K.M."/>
            <person name="Pradier J.-M."/>
            <person name="Quevillon E."/>
            <person name="Sharon A."/>
            <person name="Simon A."/>
            <person name="ten Have A."/>
            <person name="Tudzynski B."/>
            <person name="Tudzynski P."/>
            <person name="Wincker P."/>
            <person name="Andrew M."/>
            <person name="Anthouard V."/>
            <person name="Beever R.E."/>
            <person name="Beffa R."/>
            <person name="Benoit I."/>
            <person name="Bouzid O."/>
            <person name="Brault B."/>
            <person name="Chen Z."/>
            <person name="Choquer M."/>
            <person name="Collemare J."/>
            <person name="Cotton P."/>
            <person name="Danchin E.G."/>
            <person name="Da Silva C."/>
            <person name="Gautier A."/>
            <person name="Giraud C."/>
            <person name="Giraud T."/>
            <person name="Gonzalez C."/>
            <person name="Grossetete S."/>
            <person name="Gueldener U."/>
            <person name="Henrissat B."/>
            <person name="Howlett B.J."/>
            <person name="Kodira C."/>
            <person name="Kretschmer M."/>
            <person name="Lappartient A."/>
            <person name="Leroch M."/>
            <person name="Levis C."/>
            <person name="Mauceli E."/>
            <person name="Neuveglise C."/>
            <person name="Oeser B."/>
            <person name="Pearson M."/>
            <person name="Poulain J."/>
            <person name="Poussereau N."/>
            <person name="Quesneville H."/>
            <person name="Rascle C."/>
            <person name="Schumacher J."/>
            <person name="Segurens B."/>
            <person name="Sexton A."/>
            <person name="Silva E."/>
            <person name="Sirven C."/>
            <person name="Soanes D.M."/>
            <person name="Talbot N.J."/>
            <person name="Templeton M."/>
            <person name="Yandava C."/>
            <person name="Yarden O."/>
            <person name="Zeng Q."/>
            <person name="Rollins J.A."/>
            <person name="Lebrun M.-H."/>
            <person name="Dickman M."/>
        </authorList>
    </citation>
    <scope>NUCLEOTIDE SEQUENCE [LARGE SCALE GENOMIC DNA]</scope>
    <source>
        <strain>ATCC 18683 / 1980 / Ss-1</strain>
    </source>
</reference>
<gene>
    <name type="primary">ypi1</name>
    <name type="ORF">SS1G_10162</name>
</gene>
<feature type="chain" id="PRO_0000333485" description="Type 1 phosphatases regulator ypi1">
    <location>
        <begin position="1"/>
        <end position="179"/>
    </location>
</feature>
<feature type="region of interest" description="Disordered" evidence="2">
    <location>
        <begin position="1"/>
        <end position="179"/>
    </location>
</feature>
<feature type="compositionally biased region" description="Polar residues" evidence="2">
    <location>
        <begin position="1"/>
        <end position="43"/>
    </location>
</feature>
<feature type="compositionally biased region" description="Low complexity" evidence="2">
    <location>
        <begin position="52"/>
        <end position="64"/>
    </location>
</feature>
<feature type="compositionally biased region" description="Acidic residues" evidence="2">
    <location>
        <begin position="104"/>
        <end position="121"/>
    </location>
</feature>
<feature type="compositionally biased region" description="Basic and acidic residues" evidence="2">
    <location>
        <begin position="131"/>
        <end position="142"/>
    </location>
</feature>
<feature type="compositionally biased region" description="Basic residues" evidence="2">
    <location>
        <begin position="143"/>
        <end position="159"/>
    </location>
</feature>
<feature type="compositionally biased region" description="Basic and acidic residues" evidence="2">
    <location>
        <begin position="170"/>
        <end position="179"/>
    </location>
</feature>
<dbReference type="EMBL" id="CH476635">
    <property type="protein sequence ID" value="EDN94289.1"/>
    <property type="molecule type" value="Genomic_DNA"/>
</dbReference>
<dbReference type="RefSeq" id="XP_001588615.1">
    <property type="nucleotide sequence ID" value="XM_001588565.1"/>
</dbReference>
<dbReference type="STRING" id="665079.A7EXU7"/>
<dbReference type="EnsemblFungi" id="EDN94289">
    <property type="protein sequence ID" value="EDN94289"/>
    <property type="gene ID" value="SS1G_10162"/>
</dbReference>
<dbReference type="GeneID" id="5484677"/>
<dbReference type="KEGG" id="ssl:SS1G_10162"/>
<dbReference type="VEuPathDB" id="FungiDB:sscle_16g108150"/>
<dbReference type="eggNOG" id="KOG4102">
    <property type="taxonomic scope" value="Eukaryota"/>
</dbReference>
<dbReference type="HOGENOM" id="CLU_098333_2_0_1"/>
<dbReference type="InParanoid" id="A7EXU7"/>
<dbReference type="OMA" id="RRHIQWA"/>
<dbReference type="OrthoDB" id="307488at2759"/>
<dbReference type="Proteomes" id="UP000001312">
    <property type="component" value="Unassembled WGS sequence"/>
</dbReference>
<dbReference type="GO" id="GO:0005634">
    <property type="term" value="C:nucleus"/>
    <property type="evidence" value="ECO:0000318"/>
    <property type="project" value="GO_Central"/>
</dbReference>
<dbReference type="GO" id="GO:0008157">
    <property type="term" value="F:protein phosphatase 1 binding"/>
    <property type="evidence" value="ECO:0000318"/>
    <property type="project" value="GO_Central"/>
</dbReference>
<dbReference type="GO" id="GO:0004865">
    <property type="term" value="F:protein serine/threonine phosphatase inhibitor activity"/>
    <property type="evidence" value="ECO:0000318"/>
    <property type="project" value="GO_Central"/>
</dbReference>
<dbReference type="InterPro" id="IPR011107">
    <property type="entry name" value="PPI_Ypi1"/>
</dbReference>
<dbReference type="PANTHER" id="PTHR20835:SF0">
    <property type="entry name" value="E3 UBIQUITIN-PROTEIN LIGASE PPP1R11"/>
    <property type="match status" value="1"/>
</dbReference>
<dbReference type="PANTHER" id="PTHR20835">
    <property type="entry name" value="E3 UBIQUITIN-PROTEIN LIGASE PPP1R11-RELATED"/>
    <property type="match status" value="1"/>
</dbReference>
<dbReference type="Pfam" id="PF07491">
    <property type="entry name" value="PPI_Ypi1"/>
    <property type="match status" value="1"/>
</dbReference>
<comment type="function">
    <text evidence="1">Regulator of type 1 phosphatases which maintains protein phosphatase activity under strict control.</text>
</comment>
<comment type="subcellular location">
    <subcellularLocation>
        <location evidence="1">Nucleus</location>
    </subcellularLocation>
</comment>
<comment type="similarity">
    <text evidence="3">Belongs to the YPI1 family.</text>
</comment>
<evidence type="ECO:0000250" key="1"/>
<evidence type="ECO:0000256" key="2">
    <source>
        <dbReference type="SAM" id="MobiDB-lite"/>
    </source>
</evidence>
<evidence type="ECO:0000305" key="3"/>
<keyword id="KW-0539">Nucleus</keyword>
<keyword id="KW-1185">Reference proteome</keyword>